<sequence length="303" mass="31378">MTWQFPDRLSTNSALPGPAFSGQPAVDLSSFADFLRRQAPELLPAALGGAQSGPASSSGGTGQLPHGTTIVALKYPGGVVLAGDRRSTQGNMIAGRDVKKVYITDDYTATGIAGTAAIAVEFARLYAVELEHYEKLEGVPLTFAGKVNRLAIMVRGNLAAAMQGLVALPLLAGYDIDAPDPEGAGRIVSFDAAGGWNLEEEGYQSVGSGSIFAKSSMKKLYSQVVDADSAVRVAIEALYDAADDDSATGGPDLVRGIYPTAVTIGAEGALEVPESRIAELAREVIQSRSRADTFGPDAAGGDK</sequence>
<reference key="1">
    <citation type="journal article" date="2005" name="Proc. Natl. Acad. Sci. U.S.A.">
        <title>The complete genome sequence of Mycobacterium avium subspecies paratuberculosis.</title>
        <authorList>
            <person name="Li L."/>
            <person name="Bannantine J.P."/>
            <person name="Zhang Q."/>
            <person name="Amonsin A."/>
            <person name="May B.J."/>
            <person name="Alt D."/>
            <person name="Banerji N."/>
            <person name="Kanjilal S."/>
            <person name="Kapur V."/>
        </authorList>
    </citation>
    <scope>NUCLEOTIDE SEQUENCE [LARGE SCALE GENOMIC DNA]</scope>
    <source>
        <strain>ATCC BAA-968 / K-10</strain>
    </source>
</reference>
<organism>
    <name type="scientific">Mycolicibacterium paratuberculosis (strain ATCC BAA-968 / K-10)</name>
    <name type="common">Mycobacterium paratuberculosis</name>
    <dbReference type="NCBI Taxonomy" id="262316"/>
    <lineage>
        <taxon>Bacteria</taxon>
        <taxon>Bacillati</taxon>
        <taxon>Actinomycetota</taxon>
        <taxon>Actinomycetes</taxon>
        <taxon>Mycobacteriales</taxon>
        <taxon>Mycobacteriaceae</taxon>
        <taxon>Mycobacterium</taxon>
        <taxon>Mycobacterium avium complex (MAC)</taxon>
    </lineage>
</organism>
<evidence type="ECO:0000255" key="1">
    <source>
        <dbReference type="HAMAP-Rule" id="MF_02113"/>
    </source>
</evidence>
<proteinExistence type="inferred from homology"/>
<protein>
    <recommendedName>
        <fullName evidence="1">Proteasome subunit beta</fullName>
        <ecNumber evidence="1">3.4.25.1</ecNumber>
    </recommendedName>
    <alternativeName>
        <fullName evidence="1">20S proteasome beta subunit</fullName>
    </alternativeName>
    <alternativeName>
        <fullName evidence="1">Proteasome core protein PrcB</fullName>
    </alternativeName>
</protein>
<name>PSB_MYCPA</name>
<keyword id="KW-0068">Autocatalytic cleavage</keyword>
<keyword id="KW-0963">Cytoplasm</keyword>
<keyword id="KW-0378">Hydrolase</keyword>
<keyword id="KW-0645">Protease</keyword>
<keyword id="KW-0647">Proteasome</keyword>
<keyword id="KW-1185">Reference proteome</keyword>
<keyword id="KW-0888">Threonine protease</keyword>
<keyword id="KW-0865">Zymogen</keyword>
<dbReference type="EC" id="3.4.25.1" evidence="1"/>
<dbReference type="EMBL" id="AE016958">
    <property type="protein sequence ID" value="AAS04152.1"/>
    <property type="molecule type" value="Genomic_DNA"/>
</dbReference>
<dbReference type="RefSeq" id="WP_003872162.1">
    <property type="nucleotide sequence ID" value="NZ_CP106873.1"/>
</dbReference>
<dbReference type="SMR" id="Q73YW8"/>
<dbReference type="STRING" id="262316.MAP_1835c"/>
<dbReference type="MEROPS" id="T01.005"/>
<dbReference type="GeneID" id="75269948"/>
<dbReference type="KEGG" id="mpa:MAP_1835c"/>
<dbReference type="eggNOG" id="COG0638">
    <property type="taxonomic scope" value="Bacteria"/>
</dbReference>
<dbReference type="HOGENOM" id="CLU_035750_2_0_11"/>
<dbReference type="UniPathway" id="UPA00997"/>
<dbReference type="Proteomes" id="UP000000580">
    <property type="component" value="Chromosome"/>
</dbReference>
<dbReference type="GO" id="GO:0005737">
    <property type="term" value="C:cytoplasm"/>
    <property type="evidence" value="ECO:0007669"/>
    <property type="project" value="UniProtKB-SubCell"/>
</dbReference>
<dbReference type="GO" id="GO:0019774">
    <property type="term" value="C:proteasome core complex, beta-subunit complex"/>
    <property type="evidence" value="ECO:0007669"/>
    <property type="project" value="UniProtKB-UniRule"/>
</dbReference>
<dbReference type="GO" id="GO:0004298">
    <property type="term" value="F:threonine-type endopeptidase activity"/>
    <property type="evidence" value="ECO:0007669"/>
    <property type="project" value="UniProtKB-UniRule"/>
</dbReference>
<dbReference type="GO" id="GO:0019941">
    <property type="term" value="P:modification-dependent protein catabolic process"/>
    <property type="evidence" value="ECO:0007669"/>
    <property type="project" value="UniProtKB-UniRule"/>
</dbReference>
<dbReference type="GO" id="GO:0010498">
    <property type="term" value="P:proteasomal protein catabolic process"/>
    <property type="evidence" value="ECO:0007669"/>
    <property type="project" value="UniProtKB-UniRule"/>
</dbReference>
<dbReference type="CDD" id="cd01906">
    <property type="entry name" value="proteasome_protease_HslV"/>
    <property type="match status" value="1"/>
</dbReference>
<dbReference type="FunFam" id="3.60.20.10:FF:000046">
    <property type="entry name" value="Proteasome subunit beta"/>
    <property type="match status" value="1"/>
</dbReference>
<dbReference type="Gene3D" id="3.60.20.10">
    <property type="entry name" value="Glutamine Phosphoribosylpyrophosphate, subunit 1, domain 1"/>
    <property type="match status" value="1"/>
</dbReference>
<dbReference type="HAMAP" id="MF_02113_B">
    <property type="entry name" value="Proteasome_B_B"/>
    <property type="match status" value="1"/>
</dbReference>
<dbReference type="InterPro" id="IPR029055">
    <property type="entry name" value="Ntn_hydrolases_N"/>
</dbReference>
<dbReference type="InterPro" id="IPR001353">
    <property type="entry name" value="Proteasome_sua/b"/>
</dbReference>
<dbReference type="InterPro" id="IPR023333">
    <property type="entry name" value="Proteasome_suB-type"/>
</dbReference>
<dbReference type="InterPro" id="IPR022483">
    <property type="entry name" value="PSB_actinobac"/>
</dbReference>
<dbReference type="NCBIfam" id="TIGR03690">
    <property type="entry name" value="20S_bact_beta"/>
    <property type="match status" value="1"/>
</dbReference>
<dbReference type="PANTHER" id="PTHR32194:SF0">
    <property type="entry name" value="ATP-DEPENDENT PROTEASE SUBUNIT HSLV"/>
    <property type="match status" value="1"/>
</dbReference>
<dbReference type="PANTHER" id="PTHR32194">
    <property type="entry name" value="METALLOPROTEASE TLDD"/>
    <property type="match status" value="1"/>
</dbReference>
<dbReference type="Pfam" id="PF00227">
    <property type="entry name" value="Proteasome"/>
    <property type="match status" value="1"/>
</dbReference>
<dbReference type="SUPFAM" id="SSF56235">
    <property type="entry name" value="N-terminal nucleophile aminohydrolases (Ntn hydrolases)"/>
    <property type="match status" value="1"/>
</dbReference>
<dbReference type="PROSITE" id="PS51476">
    <property type="entry name" value="PROTEASOME_BETA_2"/>
    <property type="match status" value="1"/>
</dbReference>
<accession>Q73YW8</accession>
<comment type="function">
    <text evidence="1">Component of the proteasome core, a large protease complex with broad specificity involved in protein degradation.</text>
</comment>
<comment type="catalytic activity">
    <reaction evidence="1">
        <text>Cleavage of peptide bonds with very broad specificity.</text>
        <dbReference type="EC" id="3.4.25.1"/>
    </reaction>
</comment>
<comment type="activity regulation">
    <text evidence="1">The formation of the proteasomal ATPase ARC-20S proteasome complex, likely via the docking of the C-termini of ARC into the intersubunit pockets in the alpha-rings, may trigger opening of the gate for substrate entry. Interconversion between the open-gate and close-gate conformations leads to a dynamic regulation of the 20S proteasome proteolysis activity.</text>
</comment>
<comment type="pathway">
    <text evidence="1">Protein degradation; proteasomal Pup-dependent pathway.</text>
</comment>
<comment type="subunit">
    <text evidence="1">The 20S proteasome core is composed of 14 alpha and 14 beta subunits that assemble into four stacked heptameric rings, resulting in a barrel-shaped structure. The two inner rings, each composed of seven catalytic beta subunits, are sandwiched by two outer rings, each composed of seven alpha subunits. The catalytic chamber with the active sites is on the inside of the barrel. Has a gated structure, the ends of the cylinder being occluded by the N-termini of the alpha-subunits. Is capped by the proteasome-associated ATPase, ARC.</text>
</comment>
<comment type="subcellular location">
    <subcellularLocation>
        <location evidence="1">Cytoplasm</location>
    </subcellularLocation>
</comment>
<comment type="similarity">
    <text evidence="1">Belongs to the peptidase T1B family.</text>
</comment>
<feature type="propeptide" id="PRO_0000397538" description="Removed in mature form; by autocatalysis" evidence="1">
    <location>
        <begin position="1"/>
        <end position="67"/>
    </location>
</feature>
<feature type="chain" id="PRO_0000397539" description="Proteasome subunit beta">
    <location>
        <begin position="68"/>
        <end position="303"/>
    </location>
</feature>
<feature type="active site" description="Nucleophile" evidence="1">
    <location>
        <position position="68"/>
    </location>
</feature>
<gene>
    <name evidence="1" type="primary">prcB</name>
    <name type="ordered locus">MAP_1835c</name>
</gene>